<feature type="chain" id="PRO_0000204040" description="Bifunctional nitrilase/nitrile hydratase NIT4A">
    <location>
        <begin position="1"/>
        <end position="349"/>
    </location>
</feature>
<feature type="domain" description="CN hydrolase" evidence="1">
    <location>
        <begin position="29"/>
        <end position="301"/>
    </location>
</feature>
<feature type="active site" description="Proton acceptor" evidence="1">
    <location>
        <position position="69"/>
    </location>
</feature>
<feature type="active site" description="Proton donor" evidence="1">
    <location>
        <position position="156"/>
    </location>
</feature>
<feature type="active site" description="Nucleophile" evidence="1 2">
    <location>
        <position position="190"/>
    </location>
</feature>
<protein>
    <recommendedName>
        <fullName>Bifunctional nitrilase/nitrile hydratase NIT4A</fullName>
        <shortName>TNIT4A</shortName>
        <ecNumber>3.5.5.1</ecNumber>
        <ecNumber>3.5.5.4</ecNumber>
        <ecNumber>4.2.1.65</ecNumber>
    </recommendedName>
    <alternativeName>
        <fullName>3-cyanoalanine hydratase</fullName>
    </alternativeName>
    <alternativeName>
        <fullName>Cyanoalanine nitrilase A</fullName>
    </alternativeName>
    <alternativeName>
        <fullName>Nitrilase 4A</fullName>
    </alternativeName>
</protein>
<comment type="function">
    <text evidence="3 4 5">Highly specific for beta-cyano-L-alanine (Ala(CN)). Low activity with 3-phenylpropionitrile (PPN). Not associated with auxin production but may be involved in cyanide detoxification.</text>
</comment>
<comment type="catalytic activity">
    <reaction evidence="2">
        <text>a nitrile + 2 H2O = a carboxylate + NH4(+)</text>
        <dbReference type="Rhea" id="RHEA:21724"/>
        <dbReference type="ChEBI" id="CHEBI:15377"/>
        <dbReference type="ChEBI" id="CHEBI:18379"/>
        <dbReference type="ChEBI" id="CHEBI:28938"/>
        <dbReference type="ChEBI" id="CHEBI:29067"/>
        <dbReference type="EC" id="3.5.5.1"/>
    </reaction>
</comment>
<comment type="catalytic activity">
    <reaction>
        <text>3-cyano-L-alanine + 2 H2O = L-aspartate + NH4(+)</text>
        <dbReference type="Rhea" id="RHEA:11188"/>
        <dbReference type="ChEBI" id="CHEBI:15377"/>
        <dbReference type="ChEBI" id="CHEBI:28938"/>
        <dbReference type="ChEBI" id="CHEBI:29991"/>
        <dbReference type="ChEBI" id="CHEBI:77860"/>
        <dbReference type="EC" id="3.5.5.4"/>
    </reaction>
</comment>
<comment type="catalytic activity">
    <reaction>
        <text>L-asparagine = 3-cyano-L-alanine + H2O</text>
        <dbReference type="Rhea" id="RHEA:15385"/>
        <dbReference type="ChEBI" id="CHEBI:15377"/>
        <dbReference type="ChEBI" id="CHEBI:58048"/>
        <dbReference type="ChEBI" id="CHEBI:77860"/>
        <dbReference type="EC" id="4.2.1.65"/>
    </reaction>
</comment>
<comment type="subcellular location">
    <subcellularLocation>
        <location>Cell membrane</location>
        <topology>Peripheral membrane protein</topology>
        <orientation>Cytoplasmic side</orientation>
    </subcellularLocation>
    <text>Tightly associated with the plasma membrane.</text>
</comment>
<comment type="tissue specificity">
    <text evidence="3">Expressed in roots, stems, cotyledons, leaves and flowers.</text>
</comment>
<comment type="induction">
    <text evidence="3">Not induced by abscisic acid or by 1-aminocyclopropane-1-carboxylic acid (ACC).</text>
</comment>
<comment type="similarity">
    <text evidence="6">Belongs to the carbon-nitrogen hydrolase superfamily. Nitrilase family.</text>
</comment>
<reference key="1">
    <citation type="online journal article" date="1995" name="Plant Gene Register">
        <title>The cDNA sequence of an auxin-producing nitrilase homologue in tobacco.</title>
        <authorList>
            <person name="Tsunoda H."/>
            <person name="Yamaguchi K."/>
        </authorList>
        <locator>PGR95-058</locator>
    </citation>
    <scope>NUCLEOTIDE SEQUENCE [MRNA]</scope>
    <source>
        <strain>cv. SR1</strain>
        <tissue>Leaf</tissue>
    </source>
</reference>
<reference key="2">
    <citation type="journal article" date="1999" name="DNA Res.">
        <title>Structural analysis of the TNIT4 genes encoding nitrilase-like protein from tobacco.</title>
        <authorList>
            <person name="Dohmoto M."/>
            <person name="Sano J."/>
            <person name="Tsunoda H."/>
            <person name="Yamaguchi K."/>
        </authorList>
    </citation>
    <scope>FUNCTION</scope>
    <scope>TISSUE SPECIFICITY</scope>
    <scope>INDUCTION</scope>
</reference>
<reference key="3">
    <citation type="journal article" date="2000" name="DNA Res.">
        <title>Genes encoding nitrilase-like proteins from tobacco.</title>
        <authorList>
            <person name="Dohmoto M."/>
            <person name="Tsunoda H."/>
            <person name="Isaji G."/>
            <person name="Chiba R."/>
            <person name="Yamaguchi K."/>
        </authorList>
    </citation>
    <scope>FUNCTION</scope>
</reference>
<reference key="4">
    <citation type="journal article" date="2001" name="J. Biol. Chem.">
        <title>The Arabidopsis thaliana isogene NIT4 and its orthologs in tobacco encode beta-cyano-L-alanine hydratase/nitrilase.</title>
        <authorList>
            <person name="Piotrowski M."/>
            <person name="Schoenfelder S."/>
            <person name="Weiler E.W."/>
        </authorList>
    </citation>
    <scope>FUNCTION</scope>
</reference>
<keyword id="KW-1003">Cell membrane</keyword>
<keyword id="KW-0378">Hydrolase</keyword>
<keyword id="KW-0456">Lyase</keyword>
<keyword id="KW-0472">Membrane</keyword>
<keyword id="KW-1185">Reference proteome</keyword>
<dbReference type="EC" id="3.5.5.1"/>
<dbReference type="EC" id="3.5.5.4"/>
<dbReference type="EC" id="4.2.1.65"/>
<dbReference type="EMBL" id="D63331">
    <property type="protein sequence ID" value="BAA09645.1"/>
    <property type="molecule type" value="mRNA"/>
</dbReference>
<dbReference type="PIR" id="T03736">
    <property type="entry name" value="T03736"/>
</dbReference>
<dbReference type="RefSeq" id="NP_001312683.1">
    <property type="nucleotide sequence ID" value="NM_001325754.1"/>
</dbReference>
<dbReference type="SMR" id="Q42965"/>
<dbReference type="STRING" id="4097.Q42965"/>
<dbReference type="PaxDb" id="4097-Q42965"/>
<dbReference type="GeneID" id="107804379"/>
<dbReference type="KEGG" id="nta:107804379"/>
<dbReference type="OrthoDB" id="10250282at2759"/>
<dbReference type="PhylomeDB" id="Q42965"/>
<dbReference type="Proteomes" id="UP000084051">
    <property type="component" value="Unplaced"/>
</dbReference>
<dbReference type="GO" id="GO:0005886">
    <property type="term" value="C:plasma membrane"/>
    <property type="evidence" value="ECO:0007669"/>
    <property type="project" value="UniProtKB-SubCell"/>
</dbReference>
<dbReference type="GO" id="GO:0047558">
    <property type="term" value="F:3-cyanoalanine hydratase activity"/>
    <property type="evidence" value="ECO:0007669"/>
    <property type="project" value="UniProtKB-EC"/>
</dbReference>
<dbReference type="GO" id="GO:0047427">
    <property type="term" value="F:cyanoalanine nitrilase activity"/>
    <property type="evidence" value="ECO:0007669"/>
    <property type="project" value="UniProtKB-EC"/>
</dbReference>
<dbReference type="GO" id="GO:0000257">
    <property type="term" value="F:nitrilase activity"/>
    <property type="evidence" value="ECO:0000318"/>
    <property type="project" value="GO_Central"/>
</dbReference>
<dbReference type="GO" id="GO:0018822">
    <property type="term" value="F:nitrile hydratase activity"/>
    <property type="evidence" value="ECO:0000318"/>
    <property type="project" value="GO_Central"/>
</dbReference>
<dbReference type="GO" id="GO:0051410">
    <property type="term" value="P:detoxification of nitrogen compound"/>
    <property type="evidence" value="ECO:0000318"/>
    <property type="project" value="GO_Central"/>
</dbReference>
<dbReference type="CDD" id="cd07564">
    <property type="entry name" value="nitrilases_CHs"/>
    <property type="match status" value="1"/>
</dbReference>
<dbReference type="FunFam" id="3.60.110.10:FF:000006">
    <property type="entry name" value="Bifunctional nitrilase/nitrile hydratase NIT4B"/>
    <property type="match status" value="1"/>
</dbReference>
<dbReference type="Gene3D" id="3.60.110.10">
    <property type="entry name" value="Carbon-nitrogen hydrolase"/>
    <property type="match status" value="1"/>
</dbReference>
<dbReference type="InterPro" id="IPR003010">
    <property type="entry name" value="C-N_Hydrolase"/>
</dbReference>
<dbReference type="InterPro" id="IPR036526">
    <property type="entry name" value="C-N_Hydrolase_sf"/>
</dbReference>
<dbReference type="InterPro" id="IPR000132">
    <property type="entry name" value="Nitrilase/CN_hydratase_CS"/>
</dbReference>
<dbReference type="InterPro" id="IPR044149">
    <property type="entry name" value="Nitrilases_CHs"/>
</dbReference>
<dbReference type="PANTHER" id="PTHR46044:SF1">
    <property type="entry name" value="CN HYDROLASE DOMAIN-CONTAINING PROTEIN"/>
    <property type="match status" value="1"/>
</dbReference>
<dbReference type="PANTHER" id="PTHR46044">
    <property type="entry name" value="NITRILASE"/>
    <property type="match status" value="1"/>
</dbReference>
<dbReference type="Pfam" id="PF00795">
    <property type="entry name" value="CN_hydrolase"/>
    <property type="match status" value="1"/>
</dbReference>
<dbReference type="SUPFAM" id="SSF56317">
    <property type="entry name" value="Carbon-nitrogen hydrolase"/>
    <property type="match status" value="1"/>
</dbReference>
<dbReference type="PROSITE" id="PS50263">
    <property type="entry name" value="CN_HYDROLASE"/>
    <property type="match status" value="1"/>
</dbReference>
<dbReference type="PROSITE" id="PS00920">
    <property type="entry name" value="NITRIL_CHT_1"/>
    <property type="match status" value="1"/>
</dbReference>
<dbReference type="PROSITE" id="PS00921">
    <property type="entry name" value="NITRIL_CHT_2"/>
    <property type="match status" value="1"/>
</dbReference>
<proteinExistence type="evidence at transcript level"/>
<evidence type="ECO:0000255" key="1">
    <source>
        <dbReference type="PROSITE-ProRule" id="PRU00054"/>
    </source>
</evidence>
<evidence type="ECO:0000255" key="2">
    <source>
        <dbReference type="PROSITE-ProRule" id="PRU10105"/>
    </source>
</evidence>
<evidence type="ECO:0000269" key="3">
    <source>
    </source>
</evidence>
<evidence type="ECO:0000269" key="4">
    <source>
    </source>
</evidence>
<evidence type="ECO:0000269" key="5">
    <source>
    </source>
</evidence>
<evidence type="ECO:0000305" key="6"/>
<organism>
    <name type="scientific">Nicotiana tabacum</name>
    <name type="common">Common tobacco</name>
    <dbReference type="NCBI Taxonomy" id="4097"/>
    <lineage>
        <taxon>Eukaryota</taxon>
        <taxon>Viridiplantae</taxon>
        <taxon>Streptophyta</taxon>
        <taxon>Embryophyta</taxon>
        <taxon>Tracheophyta</taxon>
        <taxon>Spermatophyta</taxon>
        <taxon>Magnoliopsida</taxon>
        <taxon>eudicotyledons</taxon>
        <taxon>Gunneridae</taxon>
        <taxon>Pentapetalae</taxon>
        <taxon>asterids</taxon>
        <taxon>lamiids</taxon>
        <taxon>Solanales</taxon>
        <taxon>Solanaceae</taxon>
        <taxon>Nicotianoideae</taxon>
        <taxon>Nicotianeae</taxon>
        <taxon>Nicotiana</taxon>
    </lineage>
</organism>
<sequence>MALVPTPAVNEGPLFAEVDMGDNSSTPTVRATVVQASTIFYDTPATLVKAERLLAEAASYGAQLVVFPEAFIGGYPRGSTFGVSIGNRTAKGKEEFRKYHASAIDVPGPEVDRLAAMAGKYKVYLVMGVIERDGYTLYCTVLFFDSQGHFLGKHRKIMPTALERIIWGFGDGSTIPVYDTPLGKIGAAICWENRMPLLRTAMYAKGIEIYCAPTADSRDVWQASMTHIALEGGCFVLSANQFCRRKDYPPPPEYVFSGTEEDLTPDSIVCAGGSVIISPSGAVLAGPNYVGEALISADLDLGEIARAKFDFDVVGHYARPEVLSLIVRDHAVSPVSFTSTSSKAESSPK</sequence>
<name>NRL4A_TOBAC</name>
<accession>Q42965</accession>
<gene>
    <name type="primary">NIT4A</name>
</gene>